<keyword id="KW-0325">Glycoprotein</keyword>
<keyword id="KW-0964">Secreted</keyword>
<keyword id="KW-0732">Signal</keyword>
<keyword id="KW-0843">Virulence</keyword>
<name>NLP9_PLAVT</name>
<feature type="signal peptide" evidence="1">
    <location>
        <begin position="1"/>
        <end position="19"/>
    </location>
</feature>
<feature type="chain" id="PRO_0000456942" description="NLP effector protein 9">
    <location>
        <begin position="20"/>
        <end position="279"/>
    </location>
</feature>
<feature type="short sequence motif" description="Conserved undecapeptide motif" evidence="6">
    <location>
        <begin position="151"/>
        <end position="161"/>
    </location>
</feature>
<feature type="glycosylation site" description="N-linked (GlcNAc...) asparagine" evidence="2">
    <location>
        <position position="176"/>
    </location>
</feature>
<gene>
    <name evidence="4" type="primary">NLP9</name>
</gene>
<dbReference type="EMBL" id="MW812346">
    <property type="protein sequence ID" value="UVH27392.1"/>
    <property type="molecule type" value="mRNA"/>
</dbReference>
<dbReference type="SMR" id="P9WES0"/>
<dbReference type="GO" id="GO:0005576">
    <property type="term" value="C:extracellular region"/>
    <property type="evidence" value="ECO:0007669"/>
    <property type="project" value="UniProtKB-SubCell"/>
</dbReference>
<dbReference type="InterPro" id="IPR008701">
    <property type="entry name" value="NPP1"/>
</dbReference>
<dbReference type="PANTHER" id="PTHR33657">
    <property type="entry name" value="DOMAIN PROTEIN, PUTATIVE (AFU_ORTHOLOGUE AFUA_5G00600)-RELATED"/>
    <property type="match status" value="1"/>
</dbReference>
<dbReference type="PANTHER" id="PTHR33657:SF8">
    <property type="entry name" value="DOMAIN PROTEIN, PUTATIVE (AFU_ORTHOLOGUE AFUA_5G00600)-RELATED"/>
    <property type="match status" value="1"/>
</dbReference>
<dbReference type="Pfam" id="PF05630">
    <property type="entry name" value="NPP1"/>
    <property type="match status" value="1"/>
</dbReference>
<sequence>MKISNLLGVLVVFLAVVKGQKKDEGSDDSELLALVTVPDGPVIFSIEQVEQVAAPSTDKHLSKLKPKIAYDKVEPFEMAQPSESTITEKAAIKFRPKLYIANGCHAYPAVNKAGQISKGMKTADPTFATCGKPSKGTQVYGRSAWFGTVWAIMYAWYFPDIPLDWEYAIVWTNNPNVSNPVILGVTVSNSEGSTTSQTPPDPAMVDGRSVKIAYNNKGLESSTTLGGTQNLVMWHQLTVEAQEALNKKASFNGVQVPMNDNHFLRNLEASWPFSKEYLQ</sequence>
<accession>P9WES0</accession>
<reference key="1">
    <citation type="journal article" date="2022" name="Plant Signal. Behav.">
        <title>Functional analysis of the Nep1-like proteins from Plasmopara viticola.</title>
        <authorList>
            <person name="Xiang J."/>
            <person name="Cheng J."/>
            <person name="Wei L."/>
            <person name="Li M."/>
            <person name="Wu J."/>
        </authorList>
    </citation>
    <scope>NUCLEOTIDE SEQUENCE [MRNA]</scope>
    <scope>FUNCTION</scope>
    <scope>DOMAIN</scope>
    <scope>INDUCTION</scope>
</reference>
<comment type="function">
    <text evidence="3">Secreted effector that acts as a pathogen-associated molecular pattern (PAMP) recognized by the plant immune system (PubMed:35152834). Seems not to induce necrosis in Nicotiana benthamiana leaves (PubMed:35152834).</text>
</comment>
<comment type="subcellular location">
    <subcellularLocation>
        <location evidence="6">Secreted</location>
    </subcellularLocation>
</comment>
<comment type="induction">
    <text evidence="3">Expressed strongly at the early stages of host infection (up to 24 hours after infection) but subsided quickly afterward.</text>
</comment>
<comment type="domain">
    <text evidence="6">The structure of NLP effectors is remarkably conserved with a high level of conservation of a central region containing the conserved undecapeptide motif AIMYAWYFPKD and heptapeptide motif GHRHDWE.</text>
</comment>
<comment type="similarity">
    <text evidence="5">Belongs to the Necrosis inducing protein (NPP1) family.</text>
</comment>
<organism>
    <name type="scientific">Plasmopara viticola</name>
    <name type="common">Downy mildew of grapevine</name>
    <name type="synonym">Botrytis viticola</name>
    <dbReference type="NCBI Taxonomy" id="143451"/>
    <lineage>
        <taxon>Eukaryota</taxon>
        <taxon>Sar</taxon>
        <taxon>Stramenopiles</taxon>
        <taxon>Oomycota</taxon>
        <taxon>Peronosporales</taxon>
        <taxon>Peronosporaceae</taxon>
        <taxon>Plasmopara</taxon>
    </lineage>
</organism>
<protein>
    <recommendedName>
        <fullName evidence="4">NLP effector protein 9</fullName>
    </recommendedName>
    <alternativeName>
        <fullName evidence="4">Nep1-like protein 9</fullName>
    </alternativeName>
</protein>
<evidence type="ECO:0000255" key="1"/>
<evidence type="ECO:0000255" key="2">
    <source>
        <dbReference type="PROSITE-ProRule" id="PRU00498"/>
    </source>
</evidence>
<evidence type="ECO:0000269" key="3">
    <source>
    </source>
</evidence>
<evidence type="ECO:0000303" key="4">
    <source>
    </source>
</evidence>
<evidence type="ECO:0000305" key="5"/>
<evidence type="ECO:0000305" key="6">
    <source>
    </source>
</evidence>
<proteinExistence type="evidence at transcript level"/>